<evidence type="ECO:0000250" key="1"/>
<evidence type="ECO:0000305" key="2"/>
<keyword id="KW-0150">Chloroplast</keyword>
<keyword id="KW-0934">Plastid</keyword>
<keyword id="KW-0687">Ribonucleoprotein</keyword>
<keyword id="KW-0689">Ribosomal protein</keyword>
<keyword id="KW-0694">RNA-binding</keyword>
<keyword id="KW-0699">rRNA-binding</keyword>
<accession>A6MMS3</accession>
<geneLocation type="chloroplast"/>
<sequence length="122" mass="13547">MPTIKQLIRNTRQPIKNVTKSPALRGCPQRRGTCTRVTITPKKPNSALRKVARVRLTSGFEITAYIPGIGHNSQEHSVVLVRGGRVKDLPGVRYHIVRGTLDAVGVKDRQQGRSKYGVKKPK</sequence>
<organism>
    <name type="scientific">Illicium oligandrum</name>
    <name type="common">Star anise</name>
    <dbReference type="NCBI Taxonomy" id="145286"/>
    <lineage>
        <taxon>Eukaryota</taxon>
        <taxon>Viridiplantae</taxon>
        <taxon>Streptophyta</taxon>
        <taxon>Embryophyta</taxon>
        <taxon>Tracheophyta</taxon>
        <taxon>Spermatophyta</taxon>
        <taxon>Magnoliopsida</taxon>
        <taxon>Austrobaileyales</taxon>
        <taxon>Schisandraceae</taxon>
        <taxon>Illicium</taxon>
    </lineage>
</organism>
<dbReference type="EMBL" id="EF380354">
    <property type="protein sequence ID" value="ABQ52565.1"/>
    <property type="molecule type" value="Genomic_DNA"/>
</dbReference>
<dbReference type="RefSeq" id="YP_001294249.1">
    <property type="nucleotide sequence ID" value="NC_009600.1"/>
</dbReference>
<dbReference type="SMR" id="A6MMS3"/>
<dbReference type="GeneID" id="5236797"/>
<dbReference type="GO" id="GO:0009507">
    <property type="term" value="C:chloroplast"/>
    <property type="evidence" value="ECO:0007669"/>
    <property type="project" value="UniProtKB-SubCell"/>
</dbReference>
<dbReference type="GO" id="GO:0015935">
    <property type="term" value="C:small ribosomal subunit"/>
    <property type="evidence" value="ECO:0007669"/>
    <property type="project" value="InterPro"/>
</dbReference>
<dbReference type="GO" id="GO:0019843">
    <property type="term" value="F:rRNA binding"/>
    <property type="evidence" value="ECO:0007669"/>
    <property type="project" value="UniProtKB-UniRule"/>
</dbReference>
<dbReference type="GO" id="GO:0003735">
    <property type="term" value="F:structural constituent of ribosome"/>
    <property type="evidence" value="ECO:0007669"/>
    <property type="project" value="InterPro"/>
</dbReference>
<dbReference type="GO" id="GO:0006412">
    <property type="term" value="P:translation"/>
    <property type="evidence" value="ECO:0007669"/>
    <property type="project" value="UniProtKB-UniRule"/>
</dbReference>
<dbReference type="CDD" id="cd03368">
    <property type="entry name" value="Ribosomal_S12"/>
    <property type="match status" value="1"/>
</dbReference>
<dbReference type="FunFam" id="2.40.50.140:FF:000008">
    <property type="entry name" value="30S ribosomal protein S12, chloroplastic"/>
    <property type="match status" value="1"/>
</dbReference>
<dbReference type="Gene3D" id="2.40.50.140">
    <property type="entry name" value="Nucleic acid-binding proteins"/>
    <property type="match status" value="1"/>
</dbReference>
<dbReference type="HAMAP" id="MF_00403_B">
    <property type="entry name" value="Ribosomal_uS12_B"/>
    <property type="match status" value="1"/>
</dbReference>
<dbReference type="InterPro" id="IPR012340">
    <property type="entry name" value="NA-bd_OB-fold"/>
</dbReference>
<dbReference type="InterPro" id="IPR006032">
    <property type="entry name" value="Ribosomal_uS12"/>
</dbReference>
<dbReference type="InterPro" id="IPR005679">
    <property type="entry name" value="Ribosomal_uS12_bac"/>
</dbReference>
<dbReference type="NCBIfam" id="TIGR00981">
    <property type="entry name" value="rpsL_bact"/>
    <property type="match status" value="1"/>
</dbReference>
<dbReference type="PANTHER" id="PTHR11652">
    <property type="entry name" value="30S RIBOSOMAL PROTEIN S12 FAMILY MEMBER"/>
    <property type="match status" value="1"/>
</dbReference>
<dbReference type="Pfam" id="PF00164">
    <property type="entry name" value="Ribosom_S12_S23"/>
    <property type="match status" value="1"/>
</dbReference>
<dbReference type="PIRSF" id="PIRSF002133">
    <property type="entry name" value="Ribosomal_S12/S23"/>
    <property type="match status" value="1"/>
</dbReference>
<dbReference type="PRINTS" id="PR01034">
    <property type="entry name" value="RIBOSOMALS12"/>
</dbReference>
<dbReference type="SUPFAM" id="SSF50249">
    <property type="entry name" value="Nucleic acid-binding proteins"/>
    <property type="match status" value="1"/>
</dbReference>
<dbReference type="PROSITE" id="PS00055">
    <property type="entry name" value="RIBOSOMAL_S12"/>
    <property type="match status" value="1"/>
</dbReference>
<protein>
    <recommendedName>
        <fullName evidence="2">Small ribosomal subunit protein uS12c</fullName>
    </recommendedName>
    <alternativeName>
        <fullName>30S ribosomal protein S12, chloroplastic</fullName>
    </alternativeName>
</protein>
<feature type="chain" id="PRO_0000297715" description="Small ribosomal subunit protein uS12c">
    <location>
        <begin position="1"/>
        <end position="122"/>
    </location>
</feature>
<gene>
    <name type="primary">rps12</name>
</gene>
<comment type="function">
    <text evidence="1">With S4 and S5 plays an important role in translational accuracy. Located at the interface of the 30S and 50S subunits (By similarity).</text>
</comment>
<comment type="subunit">
    <text evidence="1">Part of the 30S ribosomal subunit.</text>
</comment>
<comment type="subcellular location">
    <subcellularLocation>
        <location>Plastid</location>
        <location>Chloroplast</location>
    </subcellularLocation>
</comment>
<comment type="similarity">
    <text evidence="2">Belongs to the universal ribosomal protein uS12 family.</text>
</comment>
<proteinExistence type="inferred from homology"/>
<reference key="1">
    <citation type="journal article" date="2007" name="Mol. Phylogenet. Evol.">
        <title>Phylogenetic and evolutionary implications of complete chloroplast genome sequences of four early-diverging angiosperms: Buxus (Buxaceae), Chloranthus (Chloranthaceae), Dioscorea (Dioscoreaceae), and Illicium (Schisandraceae).</title>
        <authorList>
            <person name="Hansen D.R."/>
            <person name="Dastidar S.G."/>
            <person name="Cai Z."/>
            <person name="Penaflor C."/>
            <person name="Kuehl J.V."/>
            <person name="Boore J.L."/>
            <person name="Jansen R.K."/>
        </authorList>
    </citation>
    <scope>NUCLEOTIDE SEQUENCE [LARGE SCALE GENOMIC DNA]</scope>
</reference>
<name>RR12_ILLOL</name>